<accession>Q049W7</accession>
<dbReference type="EMBL" id="CP000412">
    <property type="protein sequence ID" value="ABJ58755.1"/>
    <property type="molecule type" value="Genomic_DNA"/>
</dbReference>
<dbReference type="RefSeq" id="WP_003618623.1">
    <property type="nucleotide sequence ID" value="NC_008529.1"/>
</dbReference>
<dbReference type="SMR" id="Q049W7"/>
<dbReference type="KEGG" id="lbu:LBUL_1226"/>
<dbReference type="HOGENOM" id="CLU_017633_0_7_9"/>
<dbReference type="BioCyc" id="LDEL321956:LBUL_RS05735-MONOMER"/>
<dbReference type="GO" id="GO:0005737">
    <property type="term" value="C:cytoplasm"/>
    <property type="evidence" value="ECO:0007669"/>
    <property type="project" value="UniProtKB-SubCell"/>
</dbReference>
<dbReference type="GO" id="GO:0005524">
    <property type="term" value="F:ATP binding"/>
    <property type="evidence" value="ECO:0007669"/>
    <property type="project" value="InterPro"/>
</dbReference>
<dbReference type="GO" id="GO:0031072">
    <property type="term" value="F:heat shock protein binding"/>
    <property type="evidence" value="ECO:0007669"/>
    <property type="project" value="InterPro"/>
</dbReference>
<dbReference type="GO" id="GO:0051082">
    <property type="term" value="F:unfolded protein binding"/>
    <property type="evidence" value="ECO:0007669"/>
    <property type="project" value="UniProtKB-UniRule"/>
</dbReference>
<dbReference type="GO" id="GO:0008270">
    <property type="term" value="F:zinc ion binding"/>
    <property type="evidence" value="ECO:0007669"/>
    <property type="project" value="UniProtKB-UniRule"/>
</dbReference>
<dbReference type="GO" id="GO:0051085">
    <property type="term" value="P:chaperone cofactor-dependent protein refolding"/>
    <property type="evidence" value="ECO:0007669"/>
    <property type="project" value="TreeGrafter"/>
</dbReference>
<dbReference type="GO" id="GO:0006260">
    <property type="term" value="P:DNA replication"/>
    <property type="evidence" value="ECO:0007669"/>
    <property type="project" value="UniProtKB-KW"/>
</dbReference>
<dbReference type="GO" id="GO:0042026">
    <property type="term" value="P:protein refolding"/>
    <property type="evidence" value="ECO:0007669"/>
    <property type="project" value="TreeGrafter"/>
</dbReference>
<dbReference type="GO" id="GO:0009408">
    <property type="term" value="P:response to heat"/>
    <property type="evidence" value="ECO:0007669"/>
    <property type="project" value="InterPro"/>
</dbReference>
<dbReference type="CDD" id="cd06257">
    <property type="entry name" value="DnaJ"/>
    <property type="match status" value="1"/>
</dbReference>
<dbReference type="CDD" id="cd10747">
    <property type="entry name" value="DnaJ_C"/>
    <property type="match status" value="1"/>
</dbReference>
<dbReference type="CDD" id="cd10719">
    <property type="entry name" value="DnaJ_zf"/>
    <property type="match status" value="1"/>
</dbReference>
<dbReference type="FunFam" id="2.60.260.20:FF:000005">
    <property type="entry name" value="Chaperone protein dnaJ 1, mitochondrial"/>
    <property type="match status" value="1"/>
</dbReference>
<dbReference type="FunFam" id="1.10.287.110:FF:000031">
    <property type="entry name" value="Molecular chaperone DnaJ"/>
    <property type="match status" value="1"/>
</dbReference>
<dbReference type="FunFam" id="2.10.230.10:FF:000002">
    <property type="entry name" value="Molecular chaperone DnaJ"/>
    <property type="match status" value="1"/>
</dbReference>
<dbReference type="Gene3D" id="1.10.287.110">
    <property type="entry name" value="DnaJ domain"/>
    <property type="match status" value="1"/>
</dbReference>
<dbReference type="Gene3D" id="2.10.230.10">
    <property type="entry name" value="Heat shock protein DnaJ, cysteine-rich domain"/>
    <property type="match status" value="1"/>
</dbReference>
<dbReference type="Gene3D" id="2.60.260.20">
    <property type="entry name" value="Urease metallochaperone UreE, N-terminal domain"/>
    <property type="match status" value="2"/>
</dbReference>
<dbReference type="HAMAP" id="MF_01152">
    <property type="entry name" value="DnaJ"/>
    <property type="match status" value="1"/>
</dbReference>
<dbReference type="InterPro" id="IPR012724">
    <property type="entry name" value="DnaJ"/>
</dbReference>
<dbReference type="InterPro" id="IPR002939">
    <property type="entry name" value="DnaJ_C"/>
</dbReference>
<dbReference type="InterPro" id="IPR001623">
    <property type="entry name" value="DnaJ_domain"/>
</dbReference>
<dbReference type="InterPro" id="IPR018253">
    <property type="entry name" value="DnaJ_domain_CS"/>
</dbReference>
<dbReference type="InterPro" id="IPR008971">
    <property type="entry name" value="HSP40/DnaJ_pept-bd"/>
</dbReference>
<dbReference type="InterPro" id="IPR001305">
    <property type="entry name" value="HSP_DnaJ_Cys-rich_dom"/>
</dbReference>
<dbReference type="InterPro" id="IPR036410">
    <property type="entry name" value="HSP_DnaJ_Cys-rich_dom_sf"/>
</dbReference>
<dbReference type="InterPro" id="IPR036869">
    <property type="entry name" value="J_dom_sf"/>
</dbReference>
<dbReference type="NCBIfam" id="TIGR02349">
    <property type="entry name" value="DnaJ_bact"/>
    <property type="match status" value="1"/>
</dbReference>
<dbReference type="NCBIfam" id="NF008035">
    <property type="entry name" value="PRK10767.1"/>
    <property type="match status" value="1"/>
</dbReference>
<dbReference type="NCBIfam" id="NF010869">
    <property type="entry name" value="PRK14276.1"/>
    <property type="match status" value="1"/>
</dbReference>
<dbReference type="PANTHER" id="PTHR43096:SF48">
    <property type="entry name" value="CHAPERONE PROTEIN DNAJ"/>
    <property type="match status" value="1"/>
</dbReference>
<dbReference type="PANTHER" id="PTHR43096">
    <property type="entry name" value="DNAJ HOMOLOG 1, MITOCHONDRIAL-RELATED"/>
    <property type="match status" value="1"/>
</dbReference>
<dbReference type="Pfam" id="PF00226">
    <property type="entry name" value="DnaJ"/>
    <property type="match status" value="1"/>
</dbReference>
<dbReference type="Pfam" id="PF01556">
    <property type="entry name" value="DnaJ_C"/>
    <property type="match status" value="1"/>
</dbReference>
<dbReference type="Pfam" id="PF00684">
    <property type="entry name" value="DnaJ_CXXCXGXG"/>
    <property type="match status" value="1"/>
</dbReference>
<dbReference type="PRINTS" id="PR00625">
    <property type="entry name" value="JDOMAIN"/>
</dbReference>
<dbReference type="SMART" id="SM00271">
    <property type="entry name" value="DnaJ"/>
    <property type="match status" value="1"/>
</dbReference>
<dbReference type="SUPFAM" id="SSF46565">
    <property type="entry name" value="Chaperone J-domain"/>
    <property type="match status" value="1"/>
</dbReference>
<dbReference type="SUPFAM" id="SSF57938">
    <property type="entry name" value="DnaJ/Hsp40 cysteine-rich domain"/>
    <property type="match status" value="1"/>
</dbReference>
<dbReference type="SUPFAM" id="SSF49493">
    <property type="entry name" value="HSP40/DnaJ peptide-binding domain"/>
    <property type="match status" value="2"/>
</dbReference>
<dbReference type="PROSITE" id="PS00636">
    <property type="entry name" value="DNAJ_1"/>
    <property type="match status" value="1"/>
</dbReference>
<dbReference type="PROSITE" id="PS50076">
    <property type="entry name" value="DNAJ_2"/>
    <property type="match status" value="1"/>
</dbReference>
<dbReference type="PROSITE" id="PS51188">
    <property type="entry name" value="ZF_CR"/>
    <property type="match status" value="1"/>
</dbReference>
<proteinExistence type="inferred from homology"/>
<protein>
    <recommendedName>
        <fullName evidence="1">Chaperone protein DnaJ</fullName>
    </recommendedName>
</protein>
<sequence>MAANRDYYDVLGVSRDASDAEISKAYRKLAKKYHPDLNHEAGAEEKYKEVNEAYEVLHDPQKRQQYDQFGQAGMNGQGGFGGQYGGQGFGGADFGDFGDIFSSFFGGARQQVDPTAPQRGADLDYTMTIDFMDAIKGKTSEISYSRSTTCEVCKGSGAEKGTHPITCDKCGGSGMMTITQRSVLGMIQRQTTCDKCAGSGVIIQHPCHNCHGKGVKTQKQTLQVKVPAGIDNGQQIRLAGQGEAGKNGGPYGDLYIVFRVRPSKDFTRRGQTIYTTVPISFAQATLGDEINVKTVYGDTKLKIPAGTQPNQKFTLKEKGVPSLRGGSTGDQVTTVEIVIPKSINEAQRKALLEFVKASGGSIAPQEKGFFERLKEKLS</sequence>
<gene>
    <name evidence="1" type="primary">dnaJ</name>
    <name type="ordered locus">LBUL_1226</name>
</gene>
<comment type="function">
    <text evidence="1">Participates actively in the response to hyperosmotic and heat shock by preventing the aggregation of stress-denatured proteins and by disaggregating proteins, also in an autonomous, DnaK-independent fashion. Unfolded proteins bind initially to DnaJ; upon interaction with the DnaJ-bound protein, DnaK hydrolyzes its bound ATP, resulting in the formation of a stable complex. GrpE releases ADP from DnaK; ATP binding to DnaK triggers the release of the substrate protein, thus completing the reaction cycle. Several rounds of ATP-dependent interactions between DnaJ, DnaK and GrpE are required for fully efficient folding. Also involved, together with DnaK and GrpE, in the DNA replication of plasmids through activation of initiation proteins.</text>
</comment>
<comment type="cofactor">
    <cofactor evidence="1">
        <name>Zn(2+)</name>
        <dbReference type="ChEBI" id="CHEBI:29105"/>
    </cofactor>
    <text evidence="1">Binds 2 Zn(2+) ions per monomer.</text>
</comment>
<comment type="subunit">
    <text evidence="1">Homodimer.</text>
</comment>
<comment type="subcellular location">
    <subcellularLocation>
        <location evidence="1">Cytoplasm</location>
    </subcellularLocation>
</comment>
<comment type="domain">
    <text evidence="1">The J domain is necessary and sufficient to stimulate DnaK ATPase activity. Zinc center 1 plays an important role in the autonomous, DnaK-independent chaperone activity of DnaJ. Zinc center 2 is essential for interaction with DnaK and for DnaJ activity.</text>
</comment>
<comment type="similarity">
    <text evidence="1">Belongs to the DnaJ family.</text>
</comment>
<keyword id="KW-0143">Chaperone</keyword>
<keyword id="KW-0963">Cytoplasm</keyword>
<keyword id="KW-0235">DNA replication</keyword>
<keyword id="KW-0479">Metal-binding</keyword>
<keyword id="KW-0677">Repeat</keyword>
<keyword id="KW-0346">Stress response</keyword>
<keyword id="KW-0862">Zinc</keyword>
<keyword id="KW-0863">Zinc-finger</keyword>
<name>DNAJ_LACDB</name>
<evidence type="ECO:0000255" key="1">
    <source>
        <dbReference type="HAMAP-Rule" id="MF_01152"/>
    </source>
</evidence>
<reference key="1">
    <citation type="journal article" date="2006" name="Proc. Natl. Acad. Sci. U.S.A.">
        <title>Comparative genomics of the lactic acid bacteria.</title>
        <authorList>
            <person name="Makarova K.S."/>
            <person name="Slesarev A."/>
            <person name="Wolf Y.I."/>
            <person name="Sorokin A."/>
            <person name="Mirkin B."/>
            <person name="Koonin E.V."/>
            <person name="Pavlov A."/>
            <person name="Pavlova N."/>
            <person name="Karamychev V."/>
            <person name="Polouchine N."/>
            <person name="Shakhova V."/>
            <person name="Grigoriev I."/>
            <person name="Lou Y."/>
            <person name="Rohksar D."/>
            <person name="Lucas S."/>
            <person name="Huang K."/>
            <person name="Goodstein D.M."/>
            <person name="Hawkins T."/>
            <person name="Plengvidhya V."/>
            <person name="Welker D."/>
            <person name="Hughes J."/>
            <person name="Goh Y."/>
            <person name="Benson A."/>
            <person name="Baldwin K."/>
            <person name="Lee J.-H."/>
            <person name="Diaz-Muniz I."/>
            <person name="Dosti B."/>
            <person name="Smeianov V."/>
            <person name="Wechter W."/>
            <person name="Barabote R."/>
            <person name="Lorca G."/>
            <person name="Altermann E."/>
            <person name="Barrangou R."/>
            <person name="Ganesan B."/>
            <person name="Xie Y."/>
            <person name="Rawsthorne H."/>
            <person name="Tamir D."/>
            <person name="Parker C."/>
            <person name="Breidt F."/>
            <person name="Broadbent J.R."/>
            <person name="Hutkins R."/>
            <person name="O'Sullivan D."/>
            <person name="Steele J."/>
            <person name="Unlu G."/>
            <person name="Saier M.H. Jr."/>
            <person name="Klaenhammer T."/>
            <person name="Richardson P."/>
            <person name="Kozyavkin S."/>
            <person name="Weimer B.C."/>
            <person name="Mills D.A."/>
        </authorList>
    </citation>
    <scope>NUCLEOTIDE SEQUENCE [LARGE SCALE GENOMIC DNA]</scope>
    <source>
        <strain>ATCC BAA-365 / Lb-18</strain>
    </source>
</reference>
<feature type="chain" id="PRO_1000137698" description="Chaperone protein DnaJ">
    <location>
        <begin position="1"/>
        <end position="378"/>
    </location>
</feature>
<feature type="domain" description="J" evidence="1">
    <location>
        <begin position="6"/>
        <end position="70"/>
    </location>
</feature>
<feature type="repeat" description="CXXCXGXG motif">
    <location>
        <begin position="150"/>
        <end position="157"/>
    </location>
</feature>
<feature type="repeat" description="CXXCXGXG motif">
    <location>
        <begin position="167"/>
        <end position="174"/>
    </location>
</feature>
<feature type="repeat" description="CXXCXGXG motif">
    <location>
        <begin position="193"/>
        <end position="200"/>
    </location>
</feature>
<feature type="repeat" description="CXXCXGXG motif">
    <location>
        <begin position="207"/>
        <end position="214"/>
    </location>
</feature>
<feature type="zinc finger region" description="CR-type" evidence="1">
    <location>
        <begin position="137"/>
        <end position="219"/>
    </location>
</feature>
<feature type="binding site" evidence="1">
    <location>
        <position position="150"/>
    </location>
    <ligand>
        <name>Zn(2+)</name>
        <dbReference type="ChEBI" id="CHEBI:29105"/>
        <label>1</label>
    </ligand>
</feature>
<feature type="binding site" evidence="1">
    <location>
        <position position="153"/>
    </location>
    <ligand>
        <name>Zn(2+)</name>
        <dbReference type="ChEBI" id="CHEBI:29105"/>
        <label>1</label>
    </ligand>
</feature>
<feature type="binding site" evidence="1">
    <location>
        <position position="167"/>
    </location>
    <ligand>
        <name>Zn(2+)</name>
        <dbReference type="ChEBI" id="CHEBI:29105"/>
        <label>2</label>
    </ligand>
</feature>
<feature type="binding site" evidence="1">
    <location>
        <position position="170"/>
    </location>
    <ligand>
        <name>Zn(2+)</name>
        <dbReference type="ChEBI" id="CHEBI:29105"/>
        <label>2</label>
    </ligand>
</feature>
<feature type="binding site" evidence="1">
    <location>
        <position position="193"/>
    </location>
    <ligand>
        <name>Zn(2+)</name>
        <dbReference type="ChEBI" id="CHEBI:29105"/>
        <label>2</label>
    </ligand>
</feature>
<feature type="binding site" evidence="1">
    <location>
        <position position="196"/>
    </location>
    <ligand>
        <name>Zn(2+)</name>
        <dbReference type="ChEBI" id="CHEBI:29105"/>
        <label>2</label>
    </ligand>
</feature>
<feature type="binding site" evidence="1">
    <location>
        <position position="207"/>
    </location>
    <ligand>
        <name>Zn(2+)</name>
        <dbReference type="ChEBI" id="CHEBI:29105"/>
        <label>1</label>
    </ligand>
</feature>
<feature type="binding site" evidence="1">
    <location>
        <position position="210"/>
    </location>
    <ligand>
        <name>Zn(2+)</name>
        <dbReference type="ChEBI" id="CHEBI:29105"/>
        <label>1</label>
    </ligand>
</feature>
<organism>
    <name type="scientific">Lactobacillus delbrueckii subsp. bulgaricus (strain ATCC BAA-365 / Lb-18)</name>
    <dbReference type="NCBI Taxonomy" id="321956"/>
    <lineage>
        <taxon>Bacteria</taxon>
        <taxon>Bacillati</taxon>
        <taxon>Bacillota</taxon>
        <taxon>Bacilli</taxon>
        <taxon>Lactobacillales</taxon>
        <taxon>Lactobacillaceae</taxon>
        <taxon>Lactobacillus</taxon>
    </lineage>
</organism>